<evidence type="ECO:0000250" key="1"/>
<evidence type="ECO:0000255" key="2"/>
<evidence type="ECO:0000305" key="3"/>
<sequence length="675" mass="77244">MYLLPLLFPLLNLFISCILGKFLGKRVLFVLVINMLFSAIFSFWIFYEVGINKSVCYIDLGPWFHIGLLKLNWLFLFDSITSVMLVLVVFVSLLVHLYSIDYMSGDPHIIRFLGYLSLFTFFMLMLVTSGNFVQLFLGWEGVGLSSYLLINFWYTRIQANKSAMKAIIVNRFGDFGIYFSLLVIFFFFKSFDFGVVFNLVQFLDTQPRMSFLGFSLNRVDLIVIFLFLGAIGKSAQLGLHTWLPDAMEGPTPVSALIHAATMVTAGVFVLIRSSPILEYSSTGLFLVSLIGGLTALFAGTVGLVQYDIKKVIAYSTCSQLGYMFFACGMSNYSVGLFHLFNHGFFKALLFLGAGSVIHALLDEQDMRKMGGLIKLMPLTYVAILVGSLSLTGFPFLTGFYSKEVVLEIAFSKFSINSFFIYWLGVFAAFITSFYSIRLMYLVFFARPNSHARAVNSSHESSSFIFYVLAFLGFLSIFIGFIFKDLFIGLGTDFWANSIFNLYVNSDILYAEFLDYYYKLIPLVFSIVGLFFSLFVYFVIYDYTVFVVKNKFFRYAYFFLAKKWYFDLLYNNIFVFNLLSSFYLLTFKIIDRGLIELFGPLSFVRLINKSSIIFSSFQTGFLYNYIFVVLLGLMFFIKLTSSLFFPSFNSFFNFGLFICLLSLIIFLSFGNKKQNI</sequence>
<keyword id="KW-0249">Electron transport</keyword>
<keyword id="KW-0472">Membrane</keyword>
<keyword id="KW-0496">Mitochondrion</keyword>
<keyword id="KW-0999">Mitochondrion inner membrane</keyword>
<keyword id="KW-0520">NAD</keyword>
<keyword id="KW-0679">Respiratory chain</keyword>
<keyword id="KW-1278">Translocase</keyword>
<keyword id="KW-0812">Transmembrane</keyword>
<keyword id="KW-1133">Transmembrane helix</keyword>
<keyword id="KW-0813">Transport</keyword>
<keyword id="KW-0830">Ubiquinone</keyword>
<comment type="function">
    <text evidence="1">Core subunit of the mitochondrial membrane respiratory chain NADH dehydrogenase (Complex I) that is believed to belong to the minimal assembly required for catalysis. Complex I functions in the transfer of electrons from NADH to the respiratory chain. The immediate electron acceptor for the enzyme is believed to be ubiquinone (By similarity).</text>
</comment>
<comment type="catalytic activity">
    <reaction>
        <text>a ubiquinone + NADH + 5 H(+)(in) = a ubiquinol + NAD(+) + 4 H(+)(out)</text>
        <dbReference type="Rhea" id="RHEA:29091"/>
        <dbReference type="Rhea" id="RHEA-COMP:9565"/>
        <dbReference type="Rhea" id="RHEA-COMP:9566"/>
        <dbReference type="ChEBI" id="CHEBI:15378"/>
        <dbReference type="ChEBI" id="CHEBI:16389"/>
        <dbReference type="ChEBI" id="CHEBI:17976"/>
        <dbReference type="ChEBI" id="CHEBI:57540"/>
        <dbReference type="ChEBI" id="CHEBI:57945"/>
        <dbReference type="EC" id="7.1.1.2"/>
    </reaction>
</comment>
<comment type="subcellular location">
    <subcellularLocation>
        <location evidence="1">Mitochondrion inner membrane</location>
        <topology evidence="1">Multi-pass membrane protein</topology>
    </subcellularLocation>
</comment>
<comment type="similarity">
    <text evidence="3">Belongs to the complex I subunit 5 family.</text>
</comment>
<reference key="1">
    <citation type="journal article" date="1995" name="J. Mol. Biol.">
        <title>The mitochondrial DNA of the amoeboid protozoon, Acanthamoeba castellanii: complete sequence, gene content and genome organization.</title>
        <authorList>
            <person name="Burger G."/>
            <person name="Plante I."/>
            <person name="Lonergan K.M."/>
            <person name="Gray M.W."/>
        </authorList>
    </citation>
    <scope>NUCLEOTIDE SEQUENCE [GENOMIC DNA]</scope>
    <source>
        <strain>ATCC 30010 / Neff</strain>
    </source>
</reference>
<geneLocation type="mitochondrion"/>
<dbReference type="EC" id="7.1.1.2"/>
<dbReference type="EMBL" id="U12386">
    <property type="protein sequence ID" value="AAD11823.1"/>
    <property type="molecule type" value="Genomic_DNA"/>
</dbReference>
<dbReference type="PIR" id="S53831">
    <property type="entry name" value="S53831"/>
</dbReference>
<dbReference type="RefSeq" id="NP_042530.1">
    <property type="nucleotide sequence ID" value="NC_001637.1"/>
</dbReference>
<dbReference type="SMR" id="Q37372"/>
<dbReference type="GeneID" id="1734025"/>
<dbReference type="GO" id="GO:0005743">
    <property type="term" value="C:mitochondrial inner membrane"/>
    <property type="evidence" value="ECO:0007669"/>
    <property type="project" value="UniProtKB-SubCell"/>
</dbReference>
<dbReference type="GO" id="GO:0008137">
    <property type="term" value="F:NADH dehydrogenase (ubiquinone) activity"/>
    <property type="evidence" value="ECO:0007669"/>
    <property type="project" value="UniProtKB-EC"/>
</dbReference>
<dbReference type="GO" id="GO:0042773">
    <property type="term" value="P:ATP synthesis coupled electron transport"/>
    <property type="evidence" value="ECO:0007669"/>
    <property type="project" value="InterPro"/>
</dbReference>
<dbReference type="GO" id="GO:0015990">
    <property type="term" value="P:electron transport coupled proton transport"/>
    <property type="evidence" value="ECO:0007669"/>
    <property type="project" value="TreeGrafter"/>
</dbReference>
<dbReference type="Gene3D" id="1.20.5.2700">
    <property type="match status" value="1"/>
</dbReference>
<dbReference type="InterPro" id="IPR010934">
    <property type="entry name" value="NADH_DH_su5_C"/>
</dbReference>
<dbReference type="InterPro" id="IPR018393">
    <property type="entry name" value="NADHpl_OxRdtase_5_subgr"/>
</dbReference>
<dbReference type="InterPro" id="IPR001750">
    <property type="entry name" value="ND/Mrp_TM"/>
</dbReference>
<dbReference type="InterPro" id="IPR003945">
    <property type="entry name" value="NU5C-like"/>
</dbReference>
<dbReference type="InterPro" id="IPR001516">
    <property type="entry name" value="Proton_antipo_N"/>
</dbReference>
<dbReference type="NCBIfam" id="TIGR01974">
    <property type="entry name" value="NDH_I_L"/>
    <property type="match status" value="1"/>
</dbReference>
<dbReference type="NCBIfam" id="NF005141">
    <property type="entry name" value="PRK06590.1"/>
    <property type="match status" value="1"/>
</dbReference>
<dbReference type="PANTHER" id="PTHR42829">
    <property type="entry name" value="NADH-UBIQUINONE OXIDOREDUCTASE CHAIN 5"/>
    <property type="match status" value="1"/>
</dbReference>
<dbReference type="PANTHER" id="PTHR42829:SF2">
    <property type="entry name" value="NADH-UBIQUINONE OXIDOREDUCTASE CHAIN 5"/>
    <property type="match status" value="1"/>
</dbReference>
<dbReference type="Pfam" id="PF06455">
    <property type="entry name" value="NADH5_C"/>
    <property type="match status" value="1"/>
</dbReference>
<dbReference type="Pfam" id="PF00361">
    <property type="entry name" value="Proton_antipo_M"/>
    <property type="match status" value="1"/>
</dbReference>
<dbReference type="Pfam" id="PF00662">
    <property type="entry name" value="Proton_antipo_N"/>
    <property type="match status" value="1"/>
</dbReference>
<dbReference type="PRINTS" id="PR01434">
    <property type="entry name" value="NADHDHGNASE5"/>
</dbReference>
<accession>Q37372</accession>
<organism>
    <name type="scientific">Acanthamoeba castellanii</name>
    <name type="common">Amoeba</name>
    <dbReference type="NCBI Taxonomy" id="5755"/>
    <lineage>
        <taxon>Eukaryota</taxon>
        <taxon>Amoebozoa</taxon>
        <taxon>Discosea</taxon>
        <taxon>Longamoebia</taxon>
        <taxon>Centramoebida</taxon>
        <taxon>Acanthamoebidae</taxon>
        <taxon>Acanthamoeba</taxon>
    </lineage>
</organism>
<gene>
    <name type="primary">ND5</name>
    <name type="synonym">NAD5</name>
</gene>
<proteinExistence type="inferred from homology"/>
<protein>
    <recommendedName>
        <fullName>NADH-ubiquinone oxidoreductase chain 5</fullName>
        <ecNumber>7.1.1.2</ecNumber>
    </recommendedName>
    <alternativeName>
        <fullName>NADH dehydrogenase subunit 5</fullName>
    </alternativeName>
</protein>
<feature type="chain" id="PRO_0000118050" description="NADH-ubiquinone oxidoreductase chain 5">
    <location>
        <begin position="1"/>
        <end position="675"/>
    </location>
</feature>
<feature type="transmembrane region" description="Helical" evidence="2">
    <location>
        <begin position="3"/>
        <end position="23"/>
    </location>
</feature>
<feature type="transmembrane region" description="Helical" evidence="2">
    <location>
        <begin position="27"/>
        <end position="47"/>
    </location>
</feature>
<feature type="transmembrane region" description="Helical" evidence="2">
    <location>
        <begin position="75"/>
        <end position="95"/>
    </location>
</feature>
<feature type="transmembrane region" description="Helical" evidence="2">
    <location>
        <begin position="108"/>
        <end position="127"/>
    </location>
</feature>
<feature type="transmembrane region" description="Helical" evidence="2">
    <location>
        <begin position="132"/>
        <end position="154"/>
    </location>
</feature>
<feature type="transmembrane region" description="Helical" evidence="2">
    <location>
        <begin position="177"/>
        <end position="197"/>
    </location>
</feature>
<feature type="transmembrane region" description="Helical" evidence="2">
    <location>
        <begin position="211"/>
        <end position="231"/>
    </location>
</feature>
<feature type="transmembrane region" description="Helical" evidence="2">
    <location>
        <begin position="251"/>
        <end position="271"/>
    </location>
</feature>
<feature type="transmembrane region" description="Helical" evidence="2">
    <location>
        <begin position="284"/>
        <end position="304"/>
    </location>
</feature>
<feature type="transmembrane region" description="Helical" evidence="2">
    <location>
        <begin position="311"/>
        <end position="329"/>
    </location>
</feature>
<feature type="transmembrane region" description="Helical" evidence="2">
    <location>
        <begin position="334"/>
        <end position="354"/>
    </location>
</feature>
<feature type="transmembrane region" description="Helical" evidence="2">
    <location>
        <begin position="380"/>
        <end position="400"/>
    </location>
</feature>
<feature type="transmembrane region" description="Helical" evidence="2">
    <location>
        <begin position="413"/>
        <end position="433"/>
    </location>
</feature>
<feature type="transmembrane region" description="Helical" evidence="2">
    <location>
        <begin position="462"/>
        <end position="482"/>
    </location>
</feature>
<feature type="transmembrane region" description="Helical" evidence="2">
    <location>
        <begin position="519"/>
        <end position="539"/>
    </location>
</feature>
<feature type="transmembrane region" description="Helical" evidence="2">
    <location>
        <begin position="564"/>
        <end position="584"/>
    </location>
</feature>
<feature type="transmembrane region" description="Helical" evidence="2">
    <location>
        <begin position="593"/>
        <end position="613"/>
    </location>
</feature>
<feature type="transmembrane region" description="Helical" evidence="2">
    <location>
        <begin position="624"/>
        <end position="644"/>
    </location>
</feature>
<feature type="transmembrane region" description="Helical" evidence="2">
    <location>
        <begin position="649"/>
        <end position="669"/>
    </location>
</feature>
<name>NU5M_ACACA</name>